<name>LHPL7_HUMAN</name>
<evidence type="ECO:0000255" key="1"/>
<evidence type="ECO:0000305" key="2"/>
<evidence type="ECO:0000312" key="3">
    <source>
        <dbReference type="HGNC" id="HGNC:33725"/>
    </source>
</evidence>
<protein>
    <recommendedName>
        <fullName evidence="2">LHFPL tetraspan subfamily member 7 protein</fullName>
    </recommendedName>
    <alternativeName>
        <fullName>Transmembrane protein 211</fullName>
    </alternativeName>
</protein>
<organism>
    <name type="scientific">Homo sapiens</name>
    <name type="common">Human</name>
    <dbReference type="NCBI Taxonomy" id="9606"/>
    <lineage>
        <taxon>Eukaryota</taxon>
        <taxon>Metazoa</taxon>
        <taxon>Chordata</taxon>
        <taxon>Craniata</taxon>
        <taxon>Vertebrata</taxon>
        <taxon>Euteleostomi</taxon>
        <taxon>Mammalia</taxon>
        <taxon>Eutheria</taxon>
        <taxon>Euarchontoglires</taxon>
        <taxon>Primates</taxon>
        <taxon>Haplorrhini</taxon>
        <taxon>Catarrhini</taxon>
        <taxon>Hominidae</taxon>
        <taxon>Homo</taxon>
    </lineage>
</organism>
<proteinExistence type="evidence at transcript level"/>
<feature type="chain" id="PRO_0000337008" description="LHFPL tetraspan subfamily member 7 protein">
    <location>
        <begin position="1"/>
        <end position="200"/>
    </location>
</feature>
<feature type="transmembrane region" description="Helical" evidence="1">
    <location>
        <begin position="5"/>
        <end position="27"/>
    </location>
</feature>
<feature type="transmembrane region" description="Helical" evidence="1">
    <location>
        <begin position="68"/>
        <end position="88"/>
    </location>
</feature>
<feature type="transmembrane region" description="Helical" evidence="1">
    <location>
        <begin position="113"/>
        <end position="133"/>
    </location>
</feature>
<feature type="transmembrane region" description="Helical" evidence="1">
    <location>
        <begin position="150"/>
        <end position="170"/>
    </location>
</feature>
<accession>Q6ICI0</accession>
<keyword id="KW-0472">Membrane</keyword>
<keyword id="KW-1185">Reference proteome</keyword>
<keyword id="KW-0812">Transmembrane</keyword>
<keyword id="KW-1133">Transmembrane helix</keyword>
<gene>
    <name evidence="3" type="primary">LHFPL7</name>
    <name type="synonym">TMEM211</name>
</gene>
<sequence length="200" mass="21740">MLSSVWVALGLSLTCTSAFSLISPAWFQTPTFSFGILTYCSWPQGNSWNQSCVTFSSLEDIPDFAWKVSAVMLLGGWLLLAFNAIFLLSWAVAPKGLCPRRSSVPMPGVQAVAATAMIVGLLIFPIGLASPFIKEVCEASSMYYGGKCRLGWGYMTAILNAVLASLLPIISWPHTTKVQGRTIIFSSATERIIFVPEMNK</sequence>
<dbReference type="EMBL" id="AL050312">
    <property type="status" value="NOT_ANNOTATED_CDS"/>
    <property type="molecule type" value="Genomic_DNA"/>
</dbReference>
<dbReference type="EMBL" id="CR456388">
    <property type="protein sequence ID" value="CAG30274.1"/>
    <property type="status" value="ALT_INIT"/>
    <property type="molecule type" value="mRNA"/>
</dbReference>
<dbReference type="EMBL" id="BC130647">
    <property type="protein sequence ID" value="AAI30648.1"/>
    <property type="status" value="ALT_INIT"/>
    <property type="molecule type" value="mRNA"/>
</dbReference>
<dbReference type="EMBL" id="BC130649">
    <property type="protein sequence ID" value="AAI30650.1"/>
    <property type="status" value="ALT_INIT"/>
    <property type="molecule type" value="mRNA"/>
</dbReference>
<dbReference type="CCDS" id="CCDS93134.1"/>
<dbReference type="RefSeq" id="NP_001001663.1">
    <property type="nucleotide sequence ID" value="NM_001001663.1"/>
</dbReference>
<dbReference type="RefSeq" id="NP_001375128.1">
    <property type="nucleotide sequence ID" value="NM_001388199.1"/>
</dbReference>
<dbReference type="RefSeq" id="XP_047297261.1">
    <property type="nucleotide sequence ID" value="XM_047441305.1"/>
</dbReference>
<dbReference type="RefSeq" id="XP_054181437.1">
    <property type="nucleotide sequence ID" value="XM_054325462.1"/>
</dbReference>
<dbReference type="SMR" id="Q6ICI0"/>
<dbReference type="FunCoup" id="Q6ICI0">
    <property type="interactions" value="48"/>
</dbReference>
<dbReference type="STRING" id="9606.ENSP00000385494"/>
<dbReference type="iPTMnet" id="Q6ICI0"/>
<dbReference type="PhosphoSitePlus" id="Q6ICI0"/>
<dbReference type="BioMuta" id="TMEM211"/>
<dbReference type="DMDM" id="189037061"/>
<dbReference type="PaxDb" id="9606-ENSP00000385494"/>
<dbReference type="Antibodypedia" id="74015">
    <property type="antibodies" value="4 antibodies from 4 providers"/>
</dbReference>
<dbReference type="DNASU" id="255349"/>
<dbReference type="Ensembl" id="ENST00000640159.2">
    <property type="protein sequence ID" value="ENSP00000492160.1"/>
    <property type="gene ID" value="ENSG00000206069.8"/>
</dbReference>
<dbReference type="GeneID" id="255349"/>
<dbReference type="KEGG" id="hsa:255349"/>
<dbReference type="MANE-Select" id="ENST00000640159.2">
    <property type="protein sequence ID" value="ENSP00000492160.1"/>
    <property type="RefSeq nucleotide sequence ID" value="NM_001388199.1"/>
    <property type="RefSeq protein sequence ID" value="NP_001375128.1"/>
</dbReference>
<dbReference type="UCSC" id="uc003abk.2">
    <property type="organism name" value="human"/>
</dbReference>
<dbReference type="AGR" id="HGNC:33725"/>
<dbReference type="CTD" id="255349"/>
<dbReference type="GeneCards" id="LHFPL7"/>
<dbReference type="HGNC" id="HGNC:33725">
    <property type="gene designation" value="LHFPL7"/>
</dbReference>
<dbReference type="HPA" id="ENSG00000206069">
    <property type="expression patterns" value="Tissue enhanced (cervix, salivary gland, stomach)"/>
</dbReference>
<dbReference type="neXtProt" id="NX_Q6ICI0"/>
<dbReference type="OpenTargets" id="ENSG00000206069"/>
<dbReference type="VEuPathDB" id="HostDB:ENSG00000206069"/>
<dbReference type="eggNOG" id="KOG4026">
    <property type="taxonomic scope" value="Eukaryota"/>
</dbReference>
<dbReference type="GeneTree" id="ENSGT00990000203589"/>
<dbReference type="HOGENOM" id="CLU_1421051_0_0_1"/>
<dbReference type="InParanoid" id="Q6ICI0"/>
<dbReference type="OMA" id="FAKEACG"/>
<dbReference type="OrthoDB" id="5975578at2759"/>
<dbReference type="PAN-GO" id="Q6ICI0">
    <property type="GO annotations" value="1 GO annotation based on evolutionary models"/>
</dbReference>
<dbReference type="PhylomeDB" id="Q6ICI0"/>
<dbReference type="TreeFam" id="TF343322"/>
<dbReference type="PathwayCommons" id="Q6ICI0"/>
<dbReference type="SignaLink" id="Q6ICI0"/>
<dbReference type="BioGRID-ORCS" id="255349">
    <property type="hits" value="14 hits in 1147 CRISPR screens"/>
</dbReference>
<dbReference type="GenomeRNAi" id="255349"/>
<dbReference type="Pharos" id="Q6ICI0">
    <property type="development level" value="Tdark"/>
</dbReference>
<dbReference type="PRO" id="PR:Q6ICI0"/>
<dbReference type="Proteomes" id="UP000005640">
    <property type="component" value="Chromosome 22"/>
</dbReference>
<dbReference type="RNAct" id="Q6ICI0">
    <property type="molecule type" value="protein"/>
</dbReference>
<dbReference type="Bgee" id="ENSG00000206069">
    <property type="expression patterns" value="Expressed in male germ line stem cell (sensu Vertebrata) in testis and 80 other cell types or tissues"/>
</dbReference>
<dbReference type="ExpressionAtlas" id="Q6ICI0">
    <property type="expression patterns" value="baseline and differential"/>
</dbReference>
<dbReference type="GO" id="GO:0016020">
    <property type="term" value="C:membrane"/>
    <property type="evidence" value="ECO:0000318"/>
    <property type="project" value="GO_Central"/>
</dbReference>
<dbReference type="InterPro" id="IPR019372">
    <property type="entry name" value="LHFPL"/>
</dbReference>
<dbReference type="PANTHER" id="PTHR12489:SF20">
    <property type="entry name" value="LHFPL TETRASPAN SUBFAMILY MEMBER 7 PROTEIN"/>
    <property type="match status" value="1"/>
</dbReference>
<dbReference type="PANTHER" id="PTHR12489">
    <property type="entry name" value="LIPOMA HMGIC FUSION PARTNER-LIKE PROTEIN"/>
    <property type="match status" value="1"/>
</dbReference>
<dbReference type="Pfam" id="PF10242">
    <property type="entry name" value="L_HMGIC_fpl"/>
    <property type="match status" value="1"/>
</dbReference>
<reference key="1">
    <citation type="journal article" date="1999" name="Nature">
        <title>The DNA sequence of human chromosome 22.</title>
        <authorList>
            <person name="Dunham I."/>
            <person name="Hunt A.R."/>
            <person name="Collins J.E."/>
            <person name="Bruskiewich R."/>
            <person name="Beare D.M."/>
            <person name="Clamp M."/>
            <person name="Smink L.J."/>
            <person name="Ainscough R."/>
            <person name="Almeida J.P."/>
            <person name="Babbage A.K."/>
            <person name="Bagguley C."/>
            <person name="Bailey J."/>
            <person name="Barlow K.F."/>
            <person name="Bates K.N."/>
            <person name="Beasley O.P."/>
            <person name="Bird C.P."/>
            <person name="Blakey S.E."/>
            <person name="Bridgeman A.M."/>
            <person name="Buck D."/>
            <person name="Burgess J."/>
            <person name="Burrill W.D."/>
            <person name="Burton J."/>
            <person name="Carder C."/>
            <person name="Carter N.P."/>
            <person name="Chen Y."/>
            <person name="Clark G."/>
            <person name="Clegg S.M."/>
            <person name="Cobley V.E."/>
            <person name="Cole C.G."/>
            <person name="Collier R.E."/>
            <person name="Connor R."/>
            <person name="Conroy D."/>
            <person name="Corby N.R."/>
            <person name="Coville G.J."/>
            <person name="Cox A.V."/>
            <person name="Davis J."/>
            <person name="Dawson E."/>
            <person name="Dhami P.D."/>
            <person name="Dockree C."/>
            <person name="Dodsworth S.J."/>
            <person name="Durbin R.M."/>
            <person name="Ellington A.G."/>
            <person name="Evans K.L."/>
            <person name="Fey J.M."/>
            <person name="Fleming K."/>
            <person name="French L."/>
            <person name="Garner A.A."/>
            <person name="Gilbert J.G.R."/>
            <person name="Goward M.E."/>
            <person name="Grafham D.V."/>
            <person name="Griffiths M.N.D."/>
            <person name="Hall C."/>
            <person name="Hall R.E."/>
            <person name="Hall-Tamlyn G."/>
            <person name="Heathcott R.W."/>
            <person name="Ho S."/>
            <person name="Holmes S."/>
            <person name="Hunt S.E."/>
            <person name="Jones M.C."/>
            <person name="Kershaw J."/>
            <person name="Kimberley A.M."/>
            <person name="King A."/>
            <person name="Laird G.K."/>
            <person name="Langford C.F."/>
            <person name="Leversha M.A."/>
            <person name="Lloyd C."/>
            <person name="Lloyd D.M."/>
            <person name="Martyn I.D."/>
            <person name="Mashreghi-Mohammadi M."/>
            <person name="Matthews L.H."/>
            <person name="Mccann O.T."/>
            <person name="Mcclay J."/>
            <person name="Mclaren S."/>
            <person name="McMurray A.A."/>
            <person name="Milne S.A."/>
            <person name="Mortimore B.J."/>
            <person name="Odell C.N."/>
            <person name="Pavitt R."/>
            <person name="Pearce A.V."/>
            <person name="Pearson D."/>
            <person name="Phillimore B.J.C.T."/>
            <person name="Phillips S.H."/>
            <person name="Plumb R.W."/>
            <person name="Ramsay H."/>
            <person name="Ramsey Y."/>
            <person name="Rogers L."/>
            <person name="Ross M.T."/>
            <person name="Scott C.E."/>
            <person name="Sehra H.K."/>
            <person name="Skuce C.D."/>
            <person name="Smalley S."/>
            <person name="Smith M.L."/>
            <person name="Soderlund C."/>
            <person name="Spragon L."/>
            <person name="Steward C.A."/>
            <person name="Sulston J.E."/>
            <person name="Swann R.M."/>
            <person name="Vaudin M."/>
            <person name="Wall M."/>
            <person name="Wallis J.M."/>
            <person name="Whiteley M.N."/>
            <person name="Willey D.L."/>
            <person name="Williams L."/>
            <person name="Williams S.A."/>
            <person name="Williamson H."/>
            <person name="Wilmer T.E."/>
            <person name="Wilming L."/>
            <person name="Wright C.L."/>
            <person name="Hubbard T."/>
            <person name="Bentley D.R."/>
            <person name="Beck S."/>
            <person name="Rogers J."/>
            <person name="Shimizu N."/>
            <person name="Minoshima S."/>
            <person name="Kawasaki K."/>
            <person name="Sasaki T."/>
            <person name="Asakawa S."/>
            <person name="Kudoh J."/>
            <person name="Shintani A."/>
            <person name="Shibuya K."/>
            <person name="Yoshizaki Y."/>
            <person name="Aoki N."/>
            <person name="Mitsuyama S."/>
            <person name="Roe B.A."/>
            <person name="Chen F."/>
            <person name="Chu L."/>
            <person name="Crabtree J."/>
            <person name="Deschamps S."/>
            <person name="Do A."/>
            <person name="Do T."/>
            <person name="Dorman A."/>
            <person name="Fang F."/>
            <person name="Fu Y."/>
            <person name="Hu P."/>
            <person name="Hua A."/>
            <person name="Kenton S."/>
            <person name="Lai H."/>
            <person name="Lao H.I."/>
            <person name="Lewis J."/>
            <person name="Lewis S."/>
            <person name="Lin S.-P."/>
            <person name="Loh P."/>
            <person name="Malaj E."/>
            <person name="Nguyen T."/>
            <person name="Pan H."/>
            <person name="Phan S."/>
            <person name="Qi S."/>
            <person name="Qian Y."/>
            <person name="Ray L."/>
            <person name="Ren Q."/>
            <person name="Shaull S."/>
            <person name="Sloan D."/>
            <person name="Song L."/>
            <person name="Wang Q."/>
            <person name="Wang Y."/>
            <person name="Wang Z."/>
            <person name="White J."/>
            <person name="Willingham D."/>
            <person name="Wu H."/>
            <person name="Yao Z."/>
            <person name="Zhan M."/>
            <person name="Zhang G."/>
            <person name="Chissoe S."/>
            <person name="Murray J."/>
            <person name="Miller N."/>
            <person name="Minx P."/>
            <person name="Fulton R."/>
            <person name="Johnson D."/>
            <person name="Bemis G."/>
            <person name="Bentley D."/>
            <person name="Bradshaw H."/>
            <person name="Bourne S."/>
            <person name="Cordes M."/>
            <person name="Du Z."/>
            <person name="Fulton L."/>
            <person name="Goela D."/>
            <person name="Graves T."/>
            <person name="Hawkins J."/>
            <person name="Hinds K."/>
            <person name="Kemp K."/>
            <person name="Latreille P."/>
            <person name="Layman D."/>
            <person name="Ozersky P."/>
            <person name="Rohlfing T."/>
            <person name="Scheet P."/>
            <person name="Walker C."/>
            <person name="Wamsley A."/>
            <person name="Wohldmann P."/>
            <person name="Pepin K."/>
            <person name="Nelson J."/>
            <person name="Korf I."/>
            <person name="Bedell J.A."/>
            <person name="Hillier L.W."/>
            <person name="Mardis E."/>
            <person name="Waterston R."/>
            <person name="Wilson R."/>
            <person name="Emanuel B.S."/>
            <person name="Shaikh T."/>
            <person name="Kurahashi H."/>
            <person name="Saitta S."/>
            <person name="Budarf M.L."/>
            <person name="McDermid H.E."/>
            <person name="Johnson A."/>
            <person name="Wong A.C.C."/>
            <person name="Morrow B.E."/>
            <person name="Edelmann L."/>
            <person name="Kim U.J."/>
            <person name="Shizuya H."/>
            <person name="Simon M.I."/>
            <person name="Dumanski J.P."/>
            <person name="Peyrard M."/>
            <person name="Kedra D."/>
            <person name="Seroussi E."/>
            <person name="Fransson I."/>
            <person name="Tapia I."/>
            <person name="Bruder C.E."/>
            <person name="O'Brien K.P."/>
            <person name="Wilkinson P."/>
            <person name="Bodenteich A."/>
            <person name="Hartman K."/>
            <person name="Hu X."/>
            <person name="Khan A.S."/>
            <person name="Lane L."/>
            <person name="Tilahun Y."/>
            <person name="Wright H."/>
        </authorList>
    </citation>
    <scope>NUCLEOTIDE SEQUENCE [LARGE SCALE GENOMIC DNA]</scope>
</reference>
<reference key="2">
    <citation type="journal article" date="2004" name="Genome Biol.">
        <title>A genome annotation-driven approach to cloning the human ORFeome.</title>
        <authorList>
            <person name="Collins J.E."/>
            <person name="Wright C.L."/>
            <person name="Edwards C.A."/>
            <person name="Davis M.P."/>
            <person name="Grinham J.A."/>
            <person name="Cole C.G."/>
            <person name="Goward M.E."/>
            <person name="Aguado B."/>
            <person name="Mallya M."/>
            <person name="Mokrab Y."/>
            <person name="Huckle E.J."/>
            <person name="Beare D.M."/>
            <person name="Dunham I."/>
        </authorList>
    </citation>
    <scope>NUCLEOTIDE SEQUENCE [LARGE SCALE MRNA] OF 64-200</scope>
</reference>
<reference key="3">
    <citation type="journal article" date="2004" name="Genome Res.">
        <title>The status, quality, and expansion of the NIH full-length cDNA project: the Mammalian Gene Collection (MGC).</title>
        <authorList>
            <consortium name="The MGC Project Team"/>
        </authorList>
    </citation>
    <scope>NUCLEOTIDE SEQUENCE [LARGE SCALE MRNA] OF 64-200</scope>
</reference>
<comment type="subcellular location">
    <subcellularLocation>
        <location evidence="2">Membrane</location>
        <topology evidence="2">Multi-pass membrane protein</topology>
    </subcellularLocation>
</comment>
<comment type="similarity">
    <text evidence="2">Belongs to the TMEM211 family.</text>
</comment>
<comment type="sequence caution" evidence="2">
    <conflict type="erroneous initiation">
        <sequence resource="EMBL-CDS" id="AAI30648"/>
    </conflict>
    <text>Truncated N-terminus.</text>
</comment>
<comment type="sequence caution" evidence="2">
    <conflict type="erroneous initiation">
        <sequence resource="EMBL-CDS" id="AAI30650"/>
    </conflict>
    <text>Truncated N-terminus.</text>
</comment>
<comment type="sequence caution" evidence="2">
    <conflict type="erroneous initiation">
        <sequence resource="EMBL-CDS" id="CAG30274"/>
    </conflict>
    <text>Truncated N-terminus.</text>
</comment>